<keyword id="KW-0413">Isomerase</keyword>
<feature type="chain" id="PRO_1000097645" description="Ribose-5-phosphate isomerase A">
    <location>
        <begin position="1"/>
        <end position="218"/>
    </location>
</feature>
<feature type="active site" description="Proton acceptor" evidence="1">
    <location>
        <position position="103"/>
    </location>
</feature>
<feature type="binding site" evidence="1">
    <location>
        <begin position="28"/>
        <end position="31"/>
    </location>
    <ligand>
        <name>substrate</name>
    </ligand>
</feature>
<feature type="binding site" evidence="1">
    <location>
        <begin position="81"/>
        <end position="84"/>
    </location>
    <ligand>
        <name>substrate</name>
    </ligand>
</feature>
<feature type="binding site" evidence="1">
    <location>
        <begin position="94"/>
        <end position="97"/>
    </location>
    <ligand>
        <name>substrate</name>
    </ligand>
</feature>
<feature type="binding site" evidence="1">
    <location>
        <position position="121"/>
    </location>
    <ligand>
        <name>substrate</name>
    </ligand>
</feature>
<gene>
    <name evidence="1" type="primary">rpiA</name>
    <name type="ordered locus">VSAL_I2542</name>
</gene>
<evidence type="ECO:0000255" key="1">
    <source>
        <dbReference type="HAMAP-Rule" id="MF_00170"/>
    </source>
</evidence>
<protein>
    <recommendedName>
        <fullName evidence="1">Ribose-5-phosphate isomerase A</fullName>
        <ecNumber evidence="1">5.3.1.6</ecNumber>
    </recommendedName>
    <alternativeName>
        <fullName evidence="1">Phosphoriboisomerase A</fullName>
        <shortName evidence="1">PRI</shortName>
    </alternativeName>
</protein>
<organism>
    <name type="scientific">Aliivibrio salmonicida (strain LFI1238)</name>
    <name type="common">Vibrio salmonicida (strain LFI1238)</name>
    <dbReference type="NCBI Taxonomy" id="316275"/>
    <lineage>
        <taxon>Bacteria</taxon>
        <taxon>Pseudomonadati</taxon>
        <taxon>Pseudomonadota</taxon>
        <taxon>Gammaproteobacteria</taxon>
        <taxon>Vibrionales</taxon>
        <taxon>Vibrionaceae</taxon>
        <taxon>Aliivibrio</taxon>
    </lineage>
</organism>
<proteinExistence type="inferred from homology"/>
<dbReference type="EC" id="5.3.1.6" evidence="1"/>
<dbReference type="EMBL" id="FM178379">
    <property type="protein sequence ID" value="CAQ80226.1"/>
    <property type="molecule type" value="Genomic_DNA"/>
</dbReference>
<dbReference type="RefSeq" id="WP_012551014.1">
    <property type="nucleotide sequence ID" value="NC_011312.1"/>
</dbReference>
<dbReference type="SMR" id="B6EKP6"/>
<dbReference type="KEGG" id="vsa:VSAL_I2542"/>
<dbReference type="eggNOG" id="COG0120">
    <property type="taxonomic scope" value="Bacteria"/>
</dbReference>
<dbReference type="HOGENOM" id="CLU_056590_1_1_6"/>
<dbReference type="UniPathway" id="UPA00115">
    <property type="reaction ID" value="UER00412"/>
</dbReference>
<dbReference type="Proteomes" id="UP000001730">
    <property type="component" value="Chromosome 1"/>
</dbReference>
<dbReference type="GO" id="GO:0005829">
    <property type="term" value="C:cytosol"/>
    <property type="evidence" value="ECO:0007669"/>
    <property type="project" value="TreeGrafter"/>
</dbReference>
<dbReference type="GO" id="GO:0004751">
    <property type="term" value="F:ribose-5-phosphate isomerase activity"/>
    <property type="evidence" value="ECO:0007669"/>
    <property type="project" value="UniProtKB-UniRule"/>
</dbReference>
<dbReference type="GO" id="GO:0006014">
    <property type="term" value="P:D-ribose metabolic process"/>
    <property type="evidence" value="ECO:0007669"/>
    <property type="project" value="TreeGrafter"/>
</dbReference>
<dbReference type="GO" id="GO:0009052">
    <property type="term" value="P:pentose-phosphate shunt, non-oxidative branch"/>
    <property type="evidence" value="ECO:0007669"/>
    <property type="project" value="UniProtKB-UniRule"/>
</dbReference>
<dbReference type="CDD" id="cd01398">
    <property type="entry name" value="RPI_A"/>
    <property type="match status" value="1"/>
</dbReference>
<dbReference type="FunFam" id="3.30.70.260:FF:000004">
    <property type="entry name" value="Ribose-5-phosphate isomerase A"/>
    <property type="match status" value="1"/>
</dbReference>
<dbReference type="FunFam" id="3.40.50.1360:FF:000001">
    <property type="entry name" value="Ribose-5-phosphate isomerase A"/>
    <property type="match status" value="1"/>
</dbReference>
<dbReference type="Gene3D" id="3.30.70.260">
    <property type="match status" value="1"/>
</dbReference>
<dbReference type="Gene3D" id="3.40.50.1360">
    <property type="match status" value="1"/>
</dbReference>
<dbReference type="HAMAP" id="MF_00170">
    <property type="entry name" value="Rib_5P_isom_A"/>
    <property type="match status" value="1"/>
</dbReference>
<dbReference type="InterPro" id="IPR037171">
    <property type="entry name" value="NagB/RpiA_transferase-like"/>
</dbReference>
<dbReference type="InterPro" id="IPR020672">
    <property type="entry name" value="Ribose5P_isomerase_typA_subgr"/>
</dbReference>
<dbReference type="InterPro" id="IPR004788">
    <property type="entry name" value="Ribose5P_isomerase_type_A"/>
</dbReference>
<dbReference type="NCBIfam" id="NF001924">
    <property type="entry name" value="PRK00702.1"/>
    <property type="match status" value="1"/>
</dbReference>
<dbReference type="NCBIfam" id="TIGR00021">
    <property type="entry name" value="rpiA"/>
    <property type="match status" value="1"/>
</dbReference>
<dbReference type="PANTHER" id="PTHR11934">
    <property type="entry name" value="RIBOSE-5-PHOSPHATE ISOMERASE"/>
    <property type="match status" value="1"/>
</dbReference>
<dbReference type="PANTHER" id="PTHR11934:SF0">
    <property type="entry name" value="RIBOSE-5-PHOSPHATE ISOMERASE"/>
    <property type="match status" value="1"/>
</dbReference>
<dbReference type="Pfam" id="PF06026">
    <property type="entry name" value="Rib_5-P_isom_A"/>
    <property type="match status" value="1"/>
</dbReference>
<dbReference type="SUPFAM" id="SSF75445">
    <property type="entry name" value="D-ribose-5-phosphate isomerase (RpiA), lid domain"/>
    <property type="match status" value="1"/>
</dbReference>
<dbReference type="SUPFAM" id="SSF100950">
    <property type="entry name" value="NagB/RpiA/CoA transferase-like"/>
    <property type="match status" value="1"/>
</dbReference>
<reference key="1">
    <citation type="journal article" date="2008" name="BMC Genomics">
        <title>The genome sequence of the fish pathogen Aliivibrio salmonicida strain LFI1238 shows extensive evidence of gene decay.</title>
        <authorList>
            <person name="Hjerde E."/>
            <person name="Lorentzen M.S."/>
            <person name="Holden M.T."/>
            <person name="Seeger K."/>
            <person name="Paulsen S."/>
            <person name="Bason N."/>
            <person name="Churcher C."/>
            <person name="Harris D."/>
            <person name="Norbertczak H."/>
            <person name="Quail M.A."/>
            <person name="Sanders S."/>
            <person name="Thurston S."/>
            <person name="Parkhill J."/>
            <person name="Willassen N.P."/>
            <person name="Thomson N.R."/>
        </authorList>
    </citation>
    <scope>NUCLEOTIDE SEQUENCE [LARGE SCALE GENOMIC DNA]</scope>
    <source>
        <strain>LFI1238</strain>
    </source>
</reference>
<name>RPIA_ALISL</name>
<comment type="function">
    <text evidence="1">Catalyzes the reversible conversion of ribose-5-phosphate to ribulose 5-phosphate.</text>
</comment>
<comment type="catalytic activity">
    <reaction evidence="1">
        <text>aldehydo-D-ribose 5-phosphate = D-ribulose 5-phosphate</text>
        <dbReference type="Rhea" id="RHEA:14657"/>
        <dbReference type="ChEBI" id="CHEBI:58121"/>
        <dbReference type="ChEBI" id="CHEBI:58273"/>
        <dbReference type="EC" id="5.3.1.6"/>
    </reaction>
</comment>
<comment type="pathway">
    <text evidence="1">Carbohydrate degradation; pentose phosphate pathway; D-ribose 5-phosphate from D-ribulose 5-phosphate (non-oxidative stage): step 1/1.</text>
</comment>
<comment type="subunit">
    <text evidence="1">Homodimer.</text>
</comment>
<comment type="similarity">
    <text evidence="1">Belongs to the ribose 5-phosphate isomerase family.</text>
</comment>
<accession>B6EKP6</accession>
<sequence>MTQDEMKKAAGWAALEYVEVGSIVGVGTGSTVNHFIDALATMKDDIKGAVSSSVASTEKLKELGIEVFDCNDVAGLDVYVDGADEINGLNEMIKGGGAALTREKIVAAISDKFICIVDNTKQVDILGEFPLPVEVIPMARSYVARELVKLGGDPAYREGVVTDNGNMILDVHNMKITNAKELEDKINALPGVVTVGLFAHRGADVLLVGAPDGVKKFV</sequence>